<evidence type="ECO:0000255" key="1"/>
<evidence type="ECO:0000269" key="2">
    <source>
    </source>
</evidence>
<evidence type="ECO:0000269" key="3">
    <source>
    </source>
</evidence>
<evidence type="ECO:0000269" key="4">
    <source>
    </source>
</evidence>
<evidence type="ECO:0000303" key="5">
    <source>
    </source>
</evidence>
<evidence type="ECO:0000303" key="6">
    <source>
    </source>
</evidence>
<evidence type="ECO:0000305" key="7"/>
<evidence type="ECO:0000305" key="8">
    <source>
    </source>
</evidence>
<evidence type="ECO:0000305" key="9">
    <source>
    </source>
</evidence>
<evidence type="ECO:0000305" key="10">
    <source>
    </source>
</evidence>
<evidence type="ECO:0000312" key="11">
    <source>
        <dbReference type="EMBL" id="ABC02169.1"/>
    </source>
</evidence>
<evidence type="ECO:0000312" key="12">
    <source>
        <dbReference type="EMBL" id="CAK06964.1"/>
    </source>
</evidence>
<protein>
    <recommendedName>
        <fullName evidence="5">Lipopolysaccharide core galacturonosyltransferase RgtA</fullName>
        <shortName evidence="5">LPS core GalA transferase RgtA</shortName>
        <ecNumber evidence="2">2.4.1.-</ecNumber>
    </recommendedName>
    <alternativeName>
        <fullName evidence="10">Dodecaprenyl phosphate-beta-galacturonate:lipopolysaccharide core alpha-galacturonosyltransferase RgtA</fullName>
        <shortName evidence="8 10">Dodecaprenyl-P-GalA:LPS core galacturonosyltransferase RgtA</shortName>
    </alternativeName>
    <alternativeName>
        <fullName evidence="6">Galacturonic acid transferase RgtA</fullName>
        <shortName evidence="6">GalAT RgtA</shortName>
    </alternativeName>
</protein>
<sequence length="499" mass="54261">MLERATRTIKTAGLLLAAYFVLNIVLRIVLPHSLELDEAEQSFFSQYLLAGYGPQPPFYNWMQYAVVSVTGISIGALIVPKNILLFLSYLFYGLAGRRVLKDEALAAVGMLALITLPQVSYMAQQDLTHTTALLFASSLFLYGFFRTLDRPDMASYLLLGLATGIGLISKYNFALMPVVALIAILPDAEWRRRALDWRMLAAITVALVIVLPHAVWLQGNLAFASSDTLVKMAAGSEPAGAVRIGKGLLAFLVAIIAFAALPVVIFAATFRRDFVRALSAGNRWTGMMERMMLASLAGIALIVLFTGSTTVRERWLDPFLLVLPIYFLAKMQAAGLDLSAGLRRFRPVLPVLMACVLIALGFRVVGAGLIGTYSRPNVPMAGFAREMTRQAEPALVIASDTYIGGNMRLQFPDVPVVIPDFPAPGIPAYAEAKGPVLIVWRGKKTATAADAVMPERFSSALTAAGIALQEIGSLSLPYYFGRQGDNFALGYAWVRPETR</sequence>
<organism>
    <name type="scientific">Rhizobium johnstonii (strain DSM 114642 / LMG 32736 / 3841)</name>
    <name type="common">Rhizobium leguminosarum bv. viciae</name>
    <dbReference type="NCBI Taxonomy" id="216596"/>
    <lineage>
        <taxon>Bacteria</taxon>
        <taxon>Pseudomonadati</taxon>
        <taxon>Pseudomonadota</taxon>
        <taxon>Alphaproteobacteria</taxon>
        <taxon>Hyphomicrobiales</taxon>
        <taxon>Rhizobiaceae</taxon>
        <taxon>Rhizobium/Agrobacterium group</taxon>
        <taxon>Rhizobium</taxon>
        <taxon>Rhizobium johnstonii</taxon>
    </lineage>
</organism>
<name>RGTA_RHIJ3</name>
<accession>Q1MJ96</accession>
<accession>Q20DQ4</accession>
<dbReference type="EC" id="2.4.1.-" evidence="2"/>
<dbReference type="EMBL" id="DQ298016">
    <property type="protein sequence ID" value="ABC02169.1"/>
    <property type="molecule type" value="Genomic_DNA"/>
</dbReference>
<dbReference type="EMBL" id="AM236080">
    <property type="protein sequence ID" value="CAK06964.1"/>
    <property type="molecule type" value="Genomic_DNA"/>
</dbReference>
<dbReference type="RefSeq" id="WP_011651167.1">
    <property type="nucleotide sequence ID" value="NC_008380.1"/>
</dbReference>
<dbReference type="SMR" id="Q1MJ96"/>
<dbReference type="CAZy" id="GT83">
    <property type="family name" value="Glycosyltransferase Family 83"/>
</dbReference>
<dbReference type="EnsemblBacteria" id="CAK06964">
    <property type="protein sequence ID" value="CAK06964"/>
    <property type="gene ID" value="RL1469"/>
</dbReference>
<dbReference type="KEGG" id="rle:RL1469"/>
<dbReference type="eggNOG" id="COG1807">
    <property type="taxonomic scope" value="Bacteria"/>
</dbReference>
<dbReference type="HOGENOM" id="CLU_039820_0_0_5"/>
<dbReference type="UniPathway" id="UPA00958"/>
<dbReference type="Proteomes" id="UP000006575">
    <property type="component" value="Chromosome"/>
</dbReference>
<dbReference type="GO" id="GO:0005886">
    <property type="term" value="C:plasma membrane"/>
    <property type="evidence" value="ECO:0007669"/>
    <property type="project" value="UniProtKB-SubCell"/>
</dbReference>
<dbReference type="GO" id="GO:0008378">
    <property type="term" value="F:galactosyltransferase activity"/>
    <property type="evidence" value="ECO:0000314"/>
    <property type="project" value="CACAO"/>
</dbReference>
<dbReference type="GO" id="GO:0016758">
    <property type="term" value="F:hexosyltransferase activity"/>
    <property type="evidence" value="ECO:0000315"/>
    <property type="project" value="UniProtKB"/>
</dbReference>
<dbReference type="GO" id="GO:0016763">
    <property type="term" value="F:pentosyltransferase activity"/>
    <property type="evidence" value="ECO:0007669"/>
    <property type="project" value="TreeGrafter"/>
</dbReference>
<dbReference type="GO" id="GO:0009103">
    <property type="term" value="P:lipopolysaccharide biosynthetic process"/>
    <property type="evidence" value="ECO:0000315"/>
    <property type="project" value="UniProtKB"/>
</dbReference>
<dbReference type="GO" id="GO:0009244">
    <property type="term" value="P:lipopolysaccharide core region biosynthetic process"/>
    <property type="evidence" value="ECO:0007669"/>
    <property type="project" value="UniProtKB-UniPathway"/>
</dbReference>
<dbReference type="InterPro" id="IPR050297">
    <property type="entry name" value="LipidA_mod_glycosyltrf_83"/>
</dbReference>
<dbReference type="InterPro" id="IPR038731">
    <property type="entry name" value="RgtA/B/C-like"/>
</dbReference>
<dbReference type="PANTHER" id="PTHR33908">
    <property type="entry name" value="MANNOSYLTRANSFERASE YKCB-RELATED"/>
    <property type="match status" value="1"/>
</dbReference>
<dbReference type="PANTHER" id="PTHR33908:SF11">
    <property type="entry name" value="MEMBRANE PROTEIN"/>
    <property type="match status" value="1"/>
</dbReference>
<dbReference type="Pfam" id="PF13231">
    <property type="entry name" value="PMT_2"/>
    <property type="match status" value="1"/>
</dbReference>
<reference key="1">
    <citation type="journal article" date="2006" name="J. Biol. Chem.">
        <title>Expression cloning of three Rhizobium leguminosarum lipopolysaccharide core galacturonosyltransferases.</title>
        <authorList>
            <person name="Kanjilal-Kolar S."/>
            <person name="Basu S.S."/>
            <person name="Kanipes M.I."/>
            <person name="Guan Z."/>
            <person name="Garrett T.A."/>
            <person name="Raetz C.R.H."/>
        </authorList>
    </citation>
    <scope>NUCLEOTIDE SEQUENCE [GENOMIC DNA]</scope>
    <scope>FUNCTION</scope>
    <scope>SUBCELLULAR LOCATION</scope>
    <scope>PATHWAY</scope>
    <source>
        <strain evidence="11">DSM 114642 / LMG 32736 / 3841</strain>
    </source>
</reference>
<reference key="2">
    <citation type="journal article" date="2006" name="Genome Biol.">
        <title>The genome of Rhizobium leguminosarum has recognizable core and accessory components.</title>
        <authorList>
            <person name="Young J.P.W."/>
            <person name="Crossman L.C."/>
            <person name="Johnston A.W.B."/>
            <person name="Thomson N.R."/>
            <person name="Ghazoui Z.F."/>
            <person name="Hull K.H."/>
            <person name="Wexler M."/>
            <person name="Curson A.R.J."/>
            <person name="Todd J.D."/>
            <person name="Poole P.S."/>
            <person name="Mauchline T.H."/>
            <person name="East A.K."/>
            <person name="Quail M.A."/>
            <person name="Churcher C."/>
            <person name="Arrowsmith C."/>
            <person name="Cherevach I."/>
            <person name="Chillingworth T."/>
            <person name="Clarke K."/>
            <person name="Cronin A."/>
            <person name="Davis P."/>
            <person name="Fraser A."/>
            <person name="Hance Z."/>
            <person name="Hauser H."/>
            <person name="Jagels K."/>
            <person name="Moule S."/>
            <person name="Mungall K."/>
            <person name="Norbertczak H."/>
            <person name="Rabbinowitsch E."/>
            <person name="Sanders M."/>
            <person name="Simmonds M."/>
            <person name="Whitehead S."/>
            <person name="Parkhill J."/>
        </authorList>
    </citation>
    <scope>NUCLEOTIDE SEQUENCE [LARGE SCALE GENOMIC DNA]</scope>
    <source>
        <strain>DSM 114642 / LMG 32736 / 3841</strain>
    </source>
</reference>
<reference key="3">
    <citation type="journal article" date="2006" name="J. Biol. Chem.">
        <title>Dodecaprenyl phosphate-galacturonic acid as a donor substrate for lipopolysaccharide core glycosylation in Rhizobium leguminosarum.</title>
        <authorList>
            <person name="Kanjilal-Kolar S."/>
            <person name="Raetz C.R."/>
        </authorList>
    </citation>
    <scope>FUNCTION</scope>
    <scope>CATALYTIC ACTIVITY</scope>
    <scope>SUBCELLULAR LOCATION</scope>
    <source>
        <strain>DSM 114642 / LMG 32736 / 3841</strain>
    </source>
</reference>
<reference key="4">
    <citation type="journal article" date="2012" name="J. Biol. Chem.">
        <title>Characterization of galacturonosyl transferase genes rgtA, rgtB, rgtC, rgtD, and rgtE responsible for lipopolysaccharide synthesis in nitrogen-fixing endosymbiont Rhizobium leguminosarum: lipopolysaccharide core and lipid galacturonosyl residues confer membrane stability.</title>
        <authorList>
            <person name="Brown D.B."/>
            <person name="Forsberg L.S."/>
            <person name="Kannenberg E.L."/>
            <person name="Carlson R.W."/>
        </authorList>
    </citation>
    <scope>FUNCTION</scope>
    <scope>DISRUPTION PHENOTYPE</scope>
    <scope>PATHWAY</scope>
    <source>
        <strain>DSM 114642 / LMG 32736 / 3841</strain>
    </source>
</reference>
<gene>
    <name evidence="5 11" type="primary">rgtA</name>
    <name evidence="12" type="ordered locus">RL1469</name>
</gene>
<feature type="chain" id="PRO_0000436509" description="Lipopolysaccharide core galacturonosyltransferase RgtA">
    <location>
        <begin position="1"/>
        <end position="499"/>
    </location>
</feature>
<feature type="transmembrane region" description="Helical" evidence="1">
    <location>
        <begin position="11"/>
        <end position="31"/>
    </location>
</feature>
<feature type="transmembrane region" description="Helical" evidence="1">
    <location>
        <begin position="74"/>
        <end position="94"/>
    </location>
</feature>
<feature type="transmembrane region" description="Helical" evidence="1">
    <location>
        <begin position="103"/>
        <end position="123"/>
    </location>
</feature>
<feature type="transmembrane region" description="Helical" evidence="1">
    <location>
        <begin position="125"/>
        <end position="145"/>
    </location>
</feature>
<feature type="transmembrane region" description="Helical" evidence="1">
    <location>
        <begin position="165"/>
        <end position="185"/>
    </location>
</feature>
<feature type="transmembrane region" description="Helical" evidence="1">
    <location>
        <begin position="199"/>
        <end position="219"/>
    </location>
</feature>
<feature type="transmembrane region" description="Helical" evidence="1">
    <location>
        <begin position="248"/>
        <end position="268"/>
    </location>
</feature>
<feature type="transmembrane region" description="Helical" evidence="1">
    <location>
        <begin position="291"/>
        <end position="311"/>
    </location>
</feature>
<feature type="transmembrane region" description="Helical" evidence="1">
    <location>
        <begin position="316"/>
        <end position="336"/>
    </location>
</feature>
<feature type="transmembrane region" description="Helical" evidence="1">
    <location>
        <begin position="351"/>
        <end position="371"/>
    </location>
</feature>
<comment type="function">
    <text evidence="2 3 4">Involved in the modification of the lipopolysaccharide (LPS) inner core. Catalyzes the transfer of a galacturonic acid (GalA) residue to the 4-position of the outer Kdo (3-deoxy-D-manno-octulosonic acid) residue of the LPS inner core, using dodecaprenyl phosphate-GalA as the donor substrate. GalA addition by RgtA is required for RgtB activity.</text>
</comment>
<comment type="pathway">
    <text evidence="4 9">Bacterial outer membrane biogenesis; LPS core biosynthesis.</text>
</comment>
<comment type="subcellular location">
    <subcellularLocation>
        <location evidence="8 9">Cell inner membrane</location>
        <topology evidence="1">Multi-pass membrane protein</topology>
    </subcellularLocation>
</comment>
<comment type="disruption phenotype">
    <text evidence="4">Cells lacking this gene produce a normal lipid A structure with GalA at the 4'-position but a modified LPS core structure as this gene deletion results in the complete absence of GalA on both the 4- and 5-positions of the outer Kdo residue and incomplete addition of GalA to the Man residue. The mutant cells are also more susceptible to deoxycholic acid when compared with the parent strain, and more resistant to the polycationic antimicrobial peptide PmxB.</text>
</comment>
<comment type="similarity">
    <text evidence="7">Belongs to the glycosyltransferase 83 family.</text>
</comment>
<proteinExistence type="evidence at protein level"/>
<keyword id="KW-0997">Cell inner membrane</keyword>
<keyword id="KW-1003">Cell membrane</keyword>
<keyword id="KW-0328">Glycosyltransferase</keyword>
<keyword id="KW-0448">Lipopolysaccharide biosynthesis</keyword>
<keyword id="KW-0472">Membrane</keyword>
<keyword id="KW-0808">Transferase</keyword>
<keyword id="KW-0812">Transmembrane</keyword>
<keyword id="KW-1133">Transmembrane helix</keyword>